<proteinExistence type="inferred from homology"/>
<comment type="function">
    <text evidence="1">Required for maturation of 30S ribosomal subunits.</text>
</comment>
<comment type="subcellular location">
    <subcellularLocation>
        <location evidence="1">Cytoplasm</location>
    </subcellularLocation>
</comment>
<comment type="similarity">
    <text evidence="1">Belongs to the RimP family.</text>
</comment>
<comment type="sequence caution" evidence="2">
    <conflict type="erroneous initiation">
        <sequence resource="EMBL-CDS" id="BAC91429"/>
    </conflict>
</comment>
<protein>
    <recommendedName>
        <fullName evidence="1">Ribosome maturation factor RimP</fullName>
    </recommendedName>
</protein>
<feature type="chain" id="PRO_0000181874" description="Ribosome maturation factor RimP">
    <location>
        <begin position="1"/>
        <end position="156"/>
    </location>
</feature>
<keyword id="KW-0963">Cytoplasm</keyword>
<keyword id="KW-1185">Reference proteome</keyword>
<keyword id="KW-0690">Ribosome biogenesis</keyword>
<reference key="1">
    <citation type="journal article" date="2003" name="DNA Res.">
        <title>Complete genome structure of Gloeobacter violaceus PCC 7421, a cyanobacterium that lacks thylakoids.</title>
        <authorList>
            <person name="Nakamura Y."/>
            <person name="Kaneko T."/>
            <person name="Sato S."/>
            <person name="Mimuro M."/>
            <person name="Miyashita H."/>
            <person name="Tsuchiya T."/>
            <person name="Sasamoto S."/>
            <person name="Watanabe A."/>
            <person name="Kawashima K."/>
            <person name="Kishida Y."/>
            <person name="Kiyokawa C."/>
            <person name="Kohara M."/>
            <person name="Matsumoto M."/>
            <person name="Matsuno A."/>
            <person name="Nakazaki N."/>
            <person name="Shimpo S."/>
            <person name="Takeuchi C."/>
            <person name="Yamada M."/>
            <person name="Tabata S."/>
        </authorList>
    </citation>
    <scope>NUCLEOTIDE SEQUENCE [LARGE SCALE GENOMIC DNA]</scope>
    <source>
        <strain>ATCC 29082 / PCC 7421</strain>
    </source>
</reference>
<evidence type="ECO:0000255" key="1">
    <source>
        <dbReference type="HAMAP-Rule" id="MF_01077"/>
    </source>
</evidence>
<evidence type="ECO:0000305" key="2"/>
<gene>
    <name evidence="1" type="primary">rimP</name>
    <name type="ordered locus">glr3488</name>
</gene>
<accession>Q7NFN6</accession>
<sequence>MNPRDIVEQVTALAEPVAEQLGLQLVAVAYQTHTKPATLRVDIRHPTEGTGLDDCEKMSRALEALLDTRDDLIIGAYNLEVSSPGVERVLTTDREFMAFRGFPVMVKTFGPVDGKKQWEGRLLERDGENVYLTIAGRRVALPRPQVARVQLVQSLP</sequence>
<name>RIMP_GLOVI</name>
<organism>
    <name type="scientific">Gloeobacter violaceus (strain ATCC 29082 / PCC 7421)</name>
    <dbReference type="NCBI Taxonomy" id="251221"/>
    <lineage>
        <taxon>Bacteria</taxon>
        <taxon>Bacillati</taxon>
        <taxon>Cyanobacteriota</taxon>
        <taxon>Cyanophyceae</taxon>
        <taxon>Gloeobacterales</taxon>
        <taxon>Gloeobacteraceae</taxon>
        <taxon>Gloeobacter</taxon>
    </lineage>
</organism>
<dbReference type="EMBL" id="BA000045">
    <property type="protein sequence ID" value="BAC91429.1"/>
    <property type="status" value="ALT_INIT"/>
    <property type="molecule type" value="Genomic_DNA"/>
</dbReference>
<dbReference type="RefSeq" id="NP_926434.1">
    <property type="nucleotide sequence ID" value="NC_005125.1"/>
</dbReference>
<dbReference type="RefSeq" id="WP_164929303.1">
    <property type="nucleotide sequence ID" value="NC_005125.1"/>
</dbReference>
<dbReference type="SMR" id="Q7NFN6"/>
<dbReference type="STRING" id="251221.gene:10761000"/>
<dbReference type="EnsemblBacteria" id="BAC91429">
    <property type="protein sequence ID" value="BAC91429"/>
    <property type="gene ID" value="BAC91429"/>
</dbReference>
<dbReference type="KEGG" id="gvi:glr3488"/>
<dbReference type="PATRIC" id="fig|251221.4.peg.3523"/>
<dbReference type="eggNOG" id="COG0779">
    <property type="taxonomic scope" value="Bacteria"/>
</dbReference>
<dbReference type="HOGENOM" id="CLU_070525_2_1_3"/>
<dbReference type="InParanoid" id="Q7NFN6"/>
<dbReference type="OrthoDB" id="9805006at2"/>
<dbReference type="PhylomeDB" id="Q7NFN6"/>
<dbReference type="Proteomes" id="UP000000557">
    <property type="component" value="Chromosome"/>
</dbReference>
<dbReference type="GO" id="GO:0005829">
    <property type="term" value="C:cytosol"/>
    <property type="evidence" value="ECO:0000318"/>
    <property type="project" value="GO_Central"/>
</dbReference>
<dbReference type="GO" id="GO:0000028">
    <property type="term" value="P:ribosomal small subunit assembly"/>
    <property type="evidence" value="ECO:0000318"/>
    <property type="project" value="GO_Central"/>
</dbReference>
<dbReference type="GO" id="GO:0006412">
    <property type="term" value="P:translation"/>
    <property type="evidence" value="ECO:0000318"/>
    <property type="project" value="GO_Central"/>
</dbReference>
<dbReference type="CDD" id="cd01734">
    <property type="entry name" value="YlxS_C"/>
    <property type="match status" value="1"/>
</dbReference>
<dbReference type="FunFam" id="3.30.300.70:FF:000001">
    <property type="entry name" value="Ribosome maturation factor RimP"/>
    <property type="match status" value="1"/>
</dbReference>
<dbReference type="Gene3D" id="2.30.30.180">
    <property type="entry name" value="Ribosome maturation factor RimP, C-terminal domain"/>
    <property type="match status" value="1"/>
</dbReference>
<dbReference type="Gene3D" id="3.30.300.70">
    <property type="entry name" value="RimP-like superfamily, N-terminal"/>
    <property type="match status" value="1"/>
</dbReference>
<dbReference type="HAMAP" id="MF_01077">
    <property type="entry name" value="RimP"/>
    <property type="match status" value="1"/>
</dbReference>
<dbReference type="InterPro" id="IPR003728">
    <property type="entry name" value="Ribosome_maturation_RimP"/>
</dbReference>
<dbReference type="InterPro" id="IPR028998">
    <property type="entry name" value="RimP_C"/>
</dbReference>
<dbReference type="InterPro" id="IPR036847">
    <property type="entry name" value="RimP_C_sf"/>
</dbReference>
<dbReference type="InterPro" id="IPR028989">
    <property type="entry name" value="RimP_N"/>
</dbReference>
<dbReference type="InterPro" id="IPR035956">
    <property type="entry name" value="RimP_N_sf"/>
</dbReference>
<dbReference type="NCBIfam" id="NF000935">
    <property type="entry name" value="PRK00092.3-3"/>
    <property type="match status" value="1"/>
</dbReference>
<dbReference type="PANTHER" id="PTHR33867">
    <property type="entry name" value="RIBOSOME MATURATION FACTOR RIMP"/>
    <property type="match status" value="1"/>
</dbReference>
<dbReference type="PANTHER" id="PTHR33867:SF1">
    <property type="entry name" value="RIBOSOME MATURATION FACTOR RIMP"/>
    <property type="match status" value="1"/>
</dbReference>
<dbReference type="Pfam" id="PF17384">
    <property type="entry name" value="DUF150_C"/>
    <property type="match status" value="1"/>
</dbReference>
<dbReference type="Pfam" id="PF02576">
    <property type="entry name" value="RimP_N"/>
    <property type="match status" value="1"/>
</dbReference>
<dbReference type="SUPFAM" id="SSF74942">
    <property type="entry name" value="YhbC-like, C-terminal domain"/>
    <property type="match status" value="1"/>
</dbReference>
<dbReference type="SUPFAM" id="SSF75420">
    <property type="entry name" value="YhbC-like, N-terminal domain"/>
    <property type="match status" value="1"/>
</dbReference>